<sequence length="118" mass="13564">MTKNIHDVAYELQKAIAENDDFKTLKESYAAVQADAASKNLFDEFRTMQLSLQQKMMQGQEITEEDNQQAQEVVVRIQQDAKITKLMETEQRLNVVIGDVNKIIMKPLEELYSAQQQA</sequence>
<name>Y768_BACHK</name>
<comment type="similarity">
    <text evidence="1">Belongs to the UPF0342 family.</text>
</comment>
<reference key="1">
    <citation type="journal article" date="2006" name="J. Bacteriol.">
        <title>Pathogenomic sequence analysis of Bacillus cereus and Bacillus thuringiensis isolates closely related to Bacillus anthracis.</title>
        <authorList>
            <person name="Han C.S."/>
            <person name="Xie G."/>
            <person name="Challacombe J.F."/>
            <person name="Altherr M.R."/>
            <person name="Bhotika S.S."/>
            <person name="Bruce D."/>
            <person name="Campbell C.S."/>
            <person name="Campbell M.L."/>
            <person name="Chen J."/>
            <person name="Chertkov O."/>
            <person name="Cleland C."/>
            <person name="Dimitrijevic M."/>
            <person name="Doggett N.A."/>
            <person name="Fawcett J.J."/>
            <person name="Glavina T."/>
            <person name="Goodwin L.A."/>
            <person name="Hill K.K."/>
            <person name="Hitchcock P."/>
            <person name="Jackson P.J."/>
            <person name="Keim P."/>
            <person name="Kewalramani A.R."/>
            <person name="Longmire J."/>
            <person name="Lucas S."/>
            <person name="Malfatti S."/>
            <person name="McMurry K."/>
            <person name="Meincke L.J."/>
            <person name="Misra M."/>
            <person name="Moseman B.L."/>
            <person name="Mundt M."/>
            <person name="Munk A.C."/>
            <person name="Okinaka R.T."/>
            <person name="Parson-Quintana B."/>
            <person name="Reilly L.P."/>
            <person name="Richardson P."/>
            <person name="Robinson D.L."/>
            <person name="Rubin E."/>
            <person name="Saunders E."/>
            <person name="Tapia R."/>
            <person name="Tesmer J.G."/>
            <person name="Thayer N."/>
            <person name="Thompson L.S."/>
            <person name="Tice H."/>
            <person name="Ticknor L.O."/>
            <person name="Wills P.L."/>
            <person name="Brettin T.S."/>
            <person name="Gilna P."/>
        </authorList>
    </citation>
    <scope>NUCLEOTIDE SEQUENCE [LARGE SCALE GENOMIC DNA]</scope>
    <source>
        <strain>97-27</strain>
    </source>
</reference>
<accession>Q6HMV9</accession>
<organism>
    <name type="scientific">Bacillus thuringiensis subsp. konkukian (strain 97-27)</name>
    <dbReference type="NCBI Taxonomy" id="281309"/>
    <lineage>
        <taxon>Bacteria</taxon>
        <taxon>Bacillati</taxon>
        <taxon>Bacillota</taxon>
        <taxon>Bacilli</taxon>
        <taxon>Bacillales</taxon>
        <taxon>Bacillaceae</taxon>
        <taxon>Bacillus</taxon>
        <taxon>Bacillus cereus group</taxon>
    </lineage>
</organism>
<feature type="chain" id="PRO_0000109969" description="UPF0342 protein BT9727_0768">
    <location>
        <begin position="1"/>
        <end position="118"/>
    </location>
</feature>
<protein>
    <recommendedName>
        <fullName evidence="1">UPF0342 protein BT9727_0768</fullName>
    </recommendedName>
</protein>
<proteinExistence type="inferred from homology"/>
<dbReference type="EMBL" id="AE017355">
    <property type="protein sequence ID" value="AAT59148.1"/>
    <property type="molecule type" value="Genomic_DNA"/>
</dbReference>
<dbReference type="RefSeq" id="WP_000164606.1">
    <property type="nucleotide sequence ID" value="NC_005957.1"/>
</dbReference>
<dbReference type="RefSeq" id="YP_035112.1">
    <property type="nucleotide sequence ID" value="NC_005957.1"/>
</dbReference>
<dbReference type="SMR" id="Q6HMV9"/>
<dbReference type="KEGG" id="btk:BT9727_0768"/>
<dbReference type="PATRIC" id="fig|281309.8.peg.804"/>
<dbReference type="HOGENOM" id="CLU_140243_3_0_9"/>
<dbReference type="Proteomes" id="UP000001301">
    <property type="component" value="Chromosome"/>
</dbReference>
<dbReference type="Gene3D" id="1.20.1500.10">
    <property type="entry name" value="YheA/YmcA-like"/>
    <property type="match status" value="1"/>
</dbReference>
<dbReference type="HAMAP" id="MF_01526">
    <property type="entry name" value="UPF0342"/>
    <property type="match status" value="1"/>
</dbReference>
<dbReference type="InterPro" id="IPR010368">
    <property type="entry name" value="Com_YlbF"/>
</dbReference>
<dbReference type="InterPro" id="IPR023378">
    <property type="entry name" value="YheA/YmcA-like_dom_sf"/>
</dbReference>
<dbReference type="NCBIfam" id="NF010211">
    <property type="entry name" value="PRK13676.1-4"/>
    <property type="match status" value="1"/>
</dbReference>
<dbReference type="Pfam" id="PF06133">
    <property type="entry name" value="Com_YlbF"/>
    <property type="match status" value="1"/>
</dbReference>
<dbReference type="SUPFAM" id="SSF158622">
    <property type="entry name" value="YheA/YmcA-like"/>
    <property type="match status" value="1"/>
</dbReference>
<gene>
    <name type="ordered locus">BT9727_0768</name>
</gene>
<evidence type="ECO:0000255" key="1">
    <source>
        <dbReference type="HAMAP-Rule" id="MF_01526"/>
    </source>
</evidence>